<sequence length="49" mass="5911">MRVNITLEHKESGERLYLTSKNKRNTPDRLQLKKYSPKLRKHVVFTEVK</sequence>
<dbReference type="EMBL" id="AE009948">
    <property type="protein sequence ID" value="AAN00968.1"/>
    <property type="molecule type" value="Genomic_DNA"/>
</dbReference>
<dbReference type="RefSeq" id="NP_689095.1">
    <property type="nucleotide sequence ID" value="NC_004116.1"/>
</dbReference>
<dbReference type="SMR" id="P61363"/>
<dbReference type="STRING" id="208435.SAG2110"/>
<dbReference type="KEGG" id="sag:SAG2110"/>
<dbReference type="PATRIC" id="fig|208435.3.peg.2113"/>
<dbReference type="HOGENOM" id="CLU_190949_3_2_9"/>
<dbReference type="OrthoDB" id="197660at2"/>
<dbReference type="PRO" id="PR:P61363"/>
<dbReference type="Proteomes" id="UP000000821">
    <property type="component" value="Chromosome"/>
</dbReference>
<dbReference type="GO" id="GO:0005737">
    <property type="term" value="C:cytoplasm"/>
    <property type="evidence" value="ECO:0007669"/>
    <property type="project" value="UniProtKB-ARBA"/>
</dbReference>
<dbReference type="GO" id="GO:1990904">
    <property type="term" value="C:ribonucleoprotein complex"/>
    <property type="evidence" value="ECO:0007669"/>
    <property type="project" value="UniProtKB-KW"/>
</dbReference>
<dbReference type="GO" id="GO:0005840">
    <property type="term" value="C:ribosome"/>
    <property type="evidence" value="ECO:0007669"/>
    <property type="project" value="UniProtKB-KW"/>
</dbReference>
<dbReference type="GO" id="GO:0003735">
    <property type="term" value="F:structural constituent of ribosome"/>
    <property type="evidence" value="ECO:0007669"/>
    <property type="project" value="InterPro"/>
</dbReference>
<dbReference type="GO" id="GO:0006412">
    <property type="term" value="P:translation"/>
    <property type="evidence" value="ECO:0007669"/>
    <property type="project" value="UniProtKB-UniRule"/>
</dbReference>
<dbReference type="Gene3D" id="2.20.28.120">
    <property type="entry name" value="Ribosomal protein L33"/>
    <property type="match status" value="1"/>
</dbReference>
<dbReference type="HAMAP" id="MF_00294">
    <property type="entry name" value="Ribosomal_bL33"/>
    <property type="match status" value="1"/>
</dbReference>
<dbReference type="InterPro" id="IPR001705">
    <property type="entry name" value="Ribosomal_bL33"/>
</dbReference>
<dbReference type="InterPro" id="IPR018264">
    <property type="entry name" value="Ribosomal_bL33_CS"/>
</dbReference>
<dbReference type="InterPro" id="IPR038584">
    <property type="entry name" value="Ribosomal_bL33_sf"/>
</dbReference>
<dbReference type="InterPro" id="IPR011332">
    <property type="entry name" value="Ribosomal_zn-bd"/>
</dbReference>
<dbReference type="NCBIfam" id="NF001764">
    <property type="entry name" value="PRK00504.1"/>
    <property type="match status" value="1"/>
</dbReference>
<dbReference type="NCBIfam" id="NF001860">
    <property type="entry name" value="PRK00595.1"/>
    <property type="match status" value="1"/>
</dbReference>
<dbReference type="NCBIfam" id="TIGR01023">
    <property type="entry name" value="rpmG_bact"/>
    <property type="match status" value="1"/>
</dbReference>
<dbReference type="PANTHER" id="PTHR43168">
    <property type="entry name" value="50S RIBOSOMAL PROTEIN L33, CHLOROPLASTIC"/>
    <property type="match status" value="1"/>
</dbReference>
<dbReference type="PANTHER" id="PTHR43168:SF2">
    <property type="entry name" value="LARGE RIBOSOMAL SUBUNIT PROTEIN BL33C"/>
    <property type="match status" value="1"/>
</dbReference>
<dbReference type="Pfam" id="PF00471">
    <property type="entry name" value="Ribosomal_L33"/>
    <property type="match status" value="1"/>
</dbReference>
<dbReference type="SUPFAM" id="SSF57829">
    <property type="entry name" value="Zn-binding ribosomal proteins"/>
    <property type="match status" value="1"/>
</dbReference>
<dbReference type="PROSITE" id="PS00582">
    <property type="entry name" value="RIBOSOMAL_L33"/>
    <property type="match status" value="1"/>
</dbReference>
<evidence type="ECO:0000255" key="1">
    <source>
        <dbReference type="HAMAP-Rule" id="MF_00294"/>
    </source>
</evidence>
<accession>P61363</accession>
<accession>Q97NB6</accession>
<feature type="chain" id="PRO_0000170239" description="Large ribosomal subunit protein bL33C">
    <location>
        <begin position="1"/>
        <end position="49"/>
    </location>
</feature>
<name>RL333_STRA5</name>
<comment type="similarity">
    <text evidence="1">Belongs to the bacterial ribosomal protein bL33 family.</text>
</comment>
<keyword id="KW-1185">Reference proteome</keyword>
<keyword id="KW-0687">Ribonucleoprotein</keyword>
<keyword id="KW-0689">Ribosomal protein</keyword>
<protein>
    <recommendedName>
        <fullName evidence="1">Large ribosomal subunit protein bL33C</fullName>
    </recommendedName>
    <alternativeName>
        <fullName>50S ribosomal protein L33 type 3</fullName>
    </alternativeName>
</protein>
<gene>
    <name type="primary">rpmG3</name>
    <name type="synonym">rpmG-3</name>
    <name type="ordered locus">SAG2110</name>
</gene>
<proteinExistence type="inferred from homology"/>
<organism>
    <name type="scientific">Streptococcus agalactiae serotype V (strain ATCC BAA-611 / 2603 V/R)</name>
    <dbReference type="NCBI Taxonomy" id="208435"/>
    <lineage>
        <taxon>Bacteria</taxon>
        <taxon>Bacillati</taxon>
        <taxon>Bacillota</taxon>
        <taxon>Bacilli</taxon>
        <taxon>Lactobacillales</taxon>
        <taxon>Streptococcaceae</taxon>
        <taxon>Streptococcus</taxon>
    </lineage>
</organism>
<reference key="1">
    <citation type="journal article" date="2002" name="Proc. Natl. Acad. Sci. U.S.A.">
        <title>Complete genome sequence and comparative genomic analysis of an emerging human pathogen, serotype V Streptococcus agalactiae.</title>
        <authorList>
            <person name="Tettelin H."/>
            <person name="Masignani V."/>
            <person name="Cieslewicz M.J."/>
            <person name="Eisen J.A."/>
            <person name="Peterson S.N."/>
            <person name="Wessels M.R."/>
            <person name="Paulsen I.T."/>
            <person name="Nelson K.E."/>
            <person name="Margarit I."/>
            <person name="Read T.D."/>
            <person name="Madoff L.C."/>
            <person name="Wolf A.M."/>
            <person name="Beanan M.J."/>
            <person name="Brinkac L.M."/>
            <person name="Daugherty S.C."/>
            <person name="DeBoy R.T."/>
            <person name="Durkin A.S."/>
            <person name="Kolonay J.F."/>
            <person name="Madupu R."/>
            <person name="Lewis M.R."/>
            <person name="Radune D."/>
            <person name="Fedorova N.B."/>
            <person name="Scanlan D."/>
            <person name="Khouri H.M."/>
            <person name="Mulligan S."/>
            <person name="Carty H.A."/>
            <person name="Cline R.T."/>
            <person name="Van Aken S.E."/>
            <person name="Gill J."/>
            <person name="Scarselli M."/>
            <person name="Mora M."/>
            <person name="Iacobini E.T."/>
            <person name="Brettoni C."/>
            <person name="Galli G."/>
            <person name="Mariani M."/>
            <person name="Vegni F."/>
            <person name="Maione D."/>
            <person name="Rinaudo D."/>
            <person name="Rappuoli R."/>
            <person name="Telford J.L."/>
            <person name="Kasper D.L."/>
            <person name="Grandi G."/>
            <person name="Fraser C.M."/>
        </authorList>
    </citation>
    <scope>NUCLEOTIDE SEQUENCE [LARGE SCALE GENOMIC DNA]</scope>
    <source>
        <strain>ATCC BAA-611 / 2603 V/R</strain>
    </source>
</reference>